<evidence type="ECO:0000250" key="1"/>
<evidence type="ECO:0000255" key="2">
    <source>
        <dbReference type="HAMAP-Rule" id="MF_00100"/>
    </source>
</evidence>
<evidence type="ECO:0000256" key="3">
    <source>
        <dbReference type="SAM" id="MobiDB-lite"/>
    </source>
</evidence>
<keyword id="KW-0963">Cytoplasm</keyword>
<keyword id="KW-0342">GTP-binding</keyword>
<keyword id="KW-0396">Initiation factor</keyword>
<keyword id="KW-0547">Nucleotide-binding</keyword>
<keyword id="KW-0648">Protein biosynthesis</keyword>
<feature type="chain" id="PRO_1000008306" description="Translation initiation factor IF-2">
    <location>
        <begin position="1"/>
        <end position="846"/>
    </location>
</feature>
<feature type="domain" description="tr-type G">
    <location>
        <begin position="346"/>
        <end position="513"/>
    </location>
</feature>
<feature type="region of interest" description="Disordered" evidence="3">
    <location>
        <begin position="94"/>
        <end position="263"/>
    </location>
</feature>
<feature type="region of interest" description="G1" evidence="1">
    <location>
        <begin position="355"/>
        <end position="362"/>
    </location>
</feature>
<feature type="region of interest" description="G2" evidence="1">
    <location>
        <begin position="380"/>
        <end position="384"/>
    </location>
</feature>
<feature type="region of interest" description="G3" evidence="1">
    <location>
        <begin position="401"/>
        <end position="404"/>
    </location>
</feature>
<feature type="region of interest" description="G4" evidence="1">
    <location>
        <begin position="455"/>
        <end position="458"/>
    </location>
</feature>
<feature type="region of interest" description="G5" evidence="1">
    <location>
        <begin position="491"/>
        <end position="493"/>
    </location>
</feature>
<feature type="compositionally biased region" description="Basic and acidic residues" evidence="3">
    <location>
        <begin position="96"/>
        <end position="135"/>
    </location>
</feature>
<feature type="compositionally biased region" description="Low complexity" evidence="3">
    <location>
        <begin position="136"/>
        <end position="148"/>
    </location>
</feature>
<feature type="compositionally biased region" description="Low complexity" evidence="3">
    <location>
        <begin position="158"/>
        <end position="176"/>
    </location>
</feature>
<feature type="compositionally biased region" description="Basic and acidic residues" evidence="3">
    <location>
        <begin position="177"/>
        <end position="206"/>
    </location>
</feature>
<feature type="compositionally biased region" description="Basic and acidic residues" evidence="3">
    <location>
        <begin position="230"/>
        <end position="239"/>
    </location>
</feature>
<feature type="compositionally biased region" description="Basic residues" evidence="3">
    <location>
        <begin position="240"/>
        <end position="253"/>
    </location>
</feature>
<feature type="binding site" evidence="2">
    <location>
        <begin position="355"/>
        <end position="362"/>
    </location>
    <ligand>
        <name>GTP</name>
        <dbReference type="ChEBI" id="CHEBI:37565"/>
    </ligand>
</feature>
<feature type="binding site" evidence="2">
    <location>
        <begin position="401"/>
        <end position="405"/>
    </location>
    <ligand>
        <name>GTP</name>
        <dbReference type="ChEBI" id="CHEBI:37565"/>
    </ligand>
</feature>
<feature type="binding site" evidence="2">
    <location>
        <begin position="455"/>
        <end position="458"/>
    </location>
    <ligand>
        <name>GTP</name>
        <dbReference type="ChEBI" id="CHEBI:37565"/>
    </ligand>
</feature>
<comment type="function">
    <text evidence="2">One of the essential components for the initiation of protein synthesis. Protects formylmethionyl-tRNA from spontaneous hydrolysis and promotes its binding to the 30S ribosomal subunits. Also involved in the hydrolysis of GTP during the formation of the 70S ribosomal complex.</text>
</comment>
<comment type="subcellular location">
    <subcellularLocation>
        <location evidence="2">Cytoplasm</location>
    </subcellularLocation>
</comment>
<comment type="similarity">
    <text evidence="2">Belongs to the TRAFAC class translation factor GTPase superfamily. Classic translation factor GTPase family. IF-2 subfamily.</text>
</comment>
<dbReference type="EMBL" id="CP000712">
    <property type="protein sequence ID" value="ABQ80697.1"/>
    <property type="molecule type" value="Genomic_DNA"/>
</dbReference>
<dbReference type="SMR" id="A5W987"/>
<dbReference type="KEGG" id="ppf:Pput_4577"/>
<dbReference type="eggNOG" id="COG0532">
    <property type="taxonomic scope" value="Bacteria"/>
</dbReference>
<dbReference type="HOGENOM" id="CLU_006301_6_1_6"/>
<dbReference type="GO" id="GO:0005829">
    <property type="term" value="C:cytosol"/>
    <property type="evidence" value="ECO:0007669"/>
    <property type="project" value="TreeGrafter"/>
</dbReference>
<dbReference type="GO" id="GO:0005525">
    <property type="term" value="F:GTP binding"/>
    <property type="evidence" value="ECO:0007669"/>
    <property type="project" value="UniProtKB-KW"/>
</dbReference>
<dbReference type="GO" id="GO:0003924">
    <property type="term" value="F:GTPase activity"/>
    <property type="evidence" value="ECO:0007669"/>
    <property type="project" value="UniProtKB-UniRule"/>
</dbReference>
<dbReference type="GO" id="GO:0003743">
    <property type="term" value="F:translation initiation factor activity"/>
    <property type="evidence" value="ECO:0007669"/>
    <property type="project" value="UniProtKB-UniRule"/>
</dbReference>
<dbReference type="CDD" id="cd01887">
    <property type="entry name" value="IF2_eIF5B"/>
    <property type="match status" value="1"/>
</dbReference>
<dbReference type="CDD" id="cd03702">
    <property type="entry name" value="IF2_mtIF2_II"/>
    <property type="match status" value="1"/>
</dbReference>
<dbReference type="CDD" id="cd03692">
    <property type="entry name" value="mtIF2_IVc"/>
    <property type="match status" value="1"/>
</dbReference>
<dbReference type="FunFam" id="2.40.30.10:FF:000007">
    <property type="entry name" value="Translation initiation factor IF-2"/>
    <property type="match status" value="1"/>
</dbReference>
<dbReference type="FunFam" id="2.40.30.10:FF:000008">
    <property type="entry name" value="Translation initiation factor IF-2"/>
    <property type="match status" value="1"/>
</dbReference>
<dbReference type="FunFam" id="3.40.50.10050:FF:000001">
    <property type="entry name" value="Translation initiation factor IF-2"/>
    <property type="match status" value="1"/>
</dbReference>
<dbReference type="FunFam" id="3.40.50.300:FF:000019">
    <property type="entry name" value="Translation initiation factor IF-2"/>
    <property type="match status" value="1"/>
</dbReference>
<dbReference type="Gene3D" id="3.40.50.300">
    <property type="entry name" value="P-loop containing nucleotide triphosphate hydrolases"/>
    <property type="match status" value="1"/>
</dbReference>
<dbReference type="Gene3D" id="3.30.56.50">
    <property type="entry name" value="Putative DNA-binding domain, N-terminal subdomain of bacterial translation initiation factor IF2"/>
    <property type="match status" value="1"/>
</dbReference>
<dbReference type="Gene3D" id="2.40.30.10">
    <property type="entry name" value="Translation factors"/>
    <property type="match status" value="2"/>
</dbReference>
<dbReference type="Gene3D" id="3.40.50.10050">
    <property type="entry name" value="Translation initiation factor IF- 2, domain 3"/>
    <property type="match status" value="1"/>
</dbReference>
<dbReference type="HAMAP" id="MF_00100_B">
    <property type="entry name" value="IF_2_B"/>
    <property type="match status" value="1"/>
</dbReference>
<dbReference type="InterPro" id="IPR009061">
    <property type="entry name" value="DNA-bd_dom_put_sf"/>
</dbReference>
<dbReference type="InterPro" id="IPR053905">
    <property type="entry name" value="EF-G-like_DII"/>
</dbReference>
<dbReference type="InterPro" id="IPR013575">
    <property type="entry name" value="IF2_assoc_dom_bac"/>
</dbReference>
<dbReference type="InterPro" id="IPR044145">
    <property type="entry name" value="IF2_II"/>
</dbReference>
<dbReference type="InterPro" id="IPR006847">
    <property type="entry name" value="IF2_N"/>
</dbReference>
<dbReference type="InterPro" id="IPR027417">
    <property type="entry name" value="P-loop_NTPase"/>
</dbReference>
<dbReference type="InterPro" id="IPR005225">
    <property type="entry name" value="Small_GTP-bd"/>
</dbReference>
<dbReference type="InterPro" id="IPR000795">
    <property type="entry name" value="T_Tr_GTP-bd_dom"/>
</dbReference>
<dbReference type="InterPro" id="IPR000178">
    <property type="entry name" value="TF_IF2_bacterial-like"/>
</dbReference>
<dbReference type="InterPro" id="IPR015760">
    <property type="entry name" value="TIF_IF2"/>
</dbReference>
<dbReference type="InterPro" id="IPR023115">
    <property type="entry name" value="TIF_IF2_dom3"/>
</dbReference>
<dbReference type="InterPro" id="IPR036925">
    <property type="entry name" value="TIF_IF2_dom3_sf"/>
</dbReference>
<dbReference type="InterPro" id="IPR009000">
    <property type="entry name" value="Transl_B-barrel_sf"/>
</dbReference>
<dbReference type="NCBIfam" id="TIGR00487">
    <property type="entry name" value="IF-2"/>
    <property type="match status" value="1"/>
</dbReference>
<dbReference type="NCBIfam" id="TIGR00231">
    <property type="entry name" value="small_GTP"/>
    <property type="match status" value="1"/>
</dbReference>
<dbReference type="PANTHER" id="PTHR43381:SF5">
    <property type="entry name" value="TR-TYPE G DOMAIN-CONTAINING PROTEIN"/>
    <property type="match status" value="1"/>
</dbReference>
<dbReference type="PANTHER" id="PTHR43381">
    <property type="entry name" value="TRANSLATION INITIATION FACTOR IF-2-RELATED"/>
    <property type="match status" value="1"/>
</dbReference>
<dbReference type="Pfam" id="PF22042">
    <property type="entry name" value="EF-G_D2"/>
    <property type="match status" value="1"/>
</dbReference>
<dbReference type="Pfam" id="PF00009">
    <property type="entry name" value="GTP_EFTU"/>
    <property type="match status" value="1"/>
</dbReference>
<dbReference type="Pfam" id="PF11987">
    <property type="entry name" value="IF-2"/>
    <property type="match status" value="1"/>
</dbReference>
<dbReference type="Pfam" id="PF08364">
    <property type="entry name" value="IF2_assoc"/>
    <property type="match status" value="1"/>
</dbReference>
<dbReference type="Pfam" id="PF04760">
    <property type="entry name" value="IF2_N"/>
    <property type="match status" value="2"/>
</dbReference>
<dbReference type="SUPFAM" id="SSF52156">
    <property type="entry name" value="Initiation factor IF2/eIF5b, domain 3"/>
    <property type="match status" value="1"/>
</dbReference>
<dbReference type="SUPFAM" id="SSF52540">
    <property type="entry name" value="P-loop containing nucleoside triphosphate hydrolases"/>
    <property type="match status" value="1"/>
</dbReference>
<dbReference type="SUPFAM" id="SSF46955">
    <property type="entry name" value="Putative DNA-binding domain"/>
    <property type="match status" value="1"/>
</dbReference>
<dbReference type="SUPFAM" id="SSF50447">
    <property type="entry name" value="Translation proteins"/>
    <property type="match status" value="2"/>
</dbReference>
<dbReference type="PROSITE" id="PS51722">
    <property type="entry name" value="G_TR_2"/>
    <property type="match status" value="1"/>
</dbReference>
<dbReference type="PROSITE" id="PS01176">
    <property type="entry name" value="IF2"/>
    <property type="match status" value="1"/>
</dbReference>
<proteinExistence type="inferred from homology"/>
<sequence length="846" mass="91505">MTQVTVKELAQEVEAPVERLLQQMREAGLPHTDAGQVVTDNEKQTLLTHLKSSHKSKAEEPRKITLQRKTTSTLRVAGSKSISVEVRKKKVFVQRSPEEIQAEQKRELEERRAAENAARDKVEAEVRQRNEEQARRQAAGSTAAAPAPAAKPEPAPAAAPVAAPAPVVADAPASEDAAARAAERKKDETRRNESRTRDDDRRRGEAPRVSIKVKVKEKEKAPTPRAAPRTTDEESDGARRGRGGKSKLKKRNQHGFQNPTGPVIRDVTIGETITVSELANQMSVKGAEVVKFMFKMGTPVTINQVLDQETAQLIAEELGHKVTLVSDTALEDSLAESLKFEGQTESRAPVVTVMGHVDHGKTSLLDYIRRAKVAAGEAGGITQHIGAYHVETDRGMVTFLDTPGHAAFTQMRARGAKATDIVILVVAADDGVMPQTREAVQHAKAAGVPLVVAVNKIDKPGADLDRIRNELSVEGVTSEDWGGDTPFVKVSAKMGTGVDELLEAVLLQAEILELTATPTAPGRGVVVESRLDKGRGPVATILVQDGTLRQGDMVLCGSNYGRVRAMLDENGKPVKEAGPSIPVEILGLDGTPEAGDELSVVADEKKAREVALFRQGKYREVKLARAHAGKLENIFETMGQEEKKTLNIVLKTDVRGSLEALQGSLGGLGNDEVQVRVIGGGVGGITESDANLALASNAVLFGFNVRADAGARKIVEQEGLDMRYYNVIYDIIEDVKKALTGMLGSDVRENILGVAEVRDVFRSPKFGAIAGCMVIEGTVYRNRPIRVLRDDVVIFEGELESLRRFKDDASEVRSGMECGIGVKSYNDVKVGDKIEVFEKVQVARTL</sequence>
<name>IF2_PSEP1</name>
<accession>A5W987</accession>
<organism>
    <name type="scientific">Pseudomonas putida (strain ATCC 700007 / DSM 6899 / JCM 31910 / BCRC 17059 / LMG 24140 / F1)</name>
    <dbReference type="NCBI Taxonomy" id="351746"/>
    <lineage>
        <taxon>Bacteria</taxon>
        <taxon>Pseudomonadati</taxon>
        <taxon>Pseudomonadota</taxon>
        <taxon>Gammaproteobacteria</taxon>
        <taxon>Pseudomonadales</taxon>
        <taxon>Pseudomonadaceae</taxon>
        <taxon>Pseudomonas</taxon>
    </lineage>
</organism>
<reference key="1">
    <citation type="submission" date="2007-05" db="EMBL/GenBank/DDBJ databases">
        <title>Complete sequence of Pseudomonas putida F1.</title>
        <authorList>
            <consortium name="US DOE Joint Genome Institute"/>
            <person name="Copeland A."/>
            <person name="Lucas S."/>
            <person name="Lapidus A."/>
            <person name="Barry K."/>
            <person name="Detter J.C."/>
            <person name="Glavina del Rio T."/>
            <person name="Hammon N."/>
            <person name="Israni S."/>
            <person name="Dalin E."/>
            <person name="Tice H."/>
            <person name="Pitluck S."/>
            <person name="Chain P."/>
            <person name="Malfatti S."/>
            <person name="Shin M."/>
            <person name="Vergez L."/>
            <person name="Schmutz J."/>
            <person name="Larimer F."/>
            <person name="Land M."/>
            <person name="Hauser L."/>
            <person name="Kyrpides N."/>
            <person name="Lykidis A."/>
            <person name="Parales R."/>
            <person name="Richardson P."/>
        </authorList>
    </citation>
    <scope>NUCLEOTIDE SEQUENCE [LARGE SCALE GENOMIC DNA]</scope>
    <source>
        <strain>ATCC 700007 / DSM 6899 / JCM 31910 / BCRC 17059 / LMG 24140 / F1</strain>
    </source>
</reference>
<gene>
    <name evidence="2" type="primary">infB</name>
    <name type="ordered locus">Pput_4577</name>
</gene>
<protein>
    <recommendedName>
        <fullName evidence="2">Translation initiation factor IF-2</fullName>
    </recommendedName>
</protein>